<proteinExistence type="inferred from homology"/>
<accession>D5GE59</accession>
<comment type="function">
    <text evidence="1">Catalyzes 2 different reactions between oxygen and the acireductone 1,2-dihydroxy-3-keto-5-methylthiopentene (DHK-MTPene) depending upon the metal bound in the active site. Fe-containing acireductone dioxygenase (Fe-ARD) produces formate and 2-keto-4-methylthiobutyrate (KMTB), the alpha-ketoacid precursor of methionine in the methionine recycle pathway. Ni-containing acireductone dioxygenase (Ni-ARD) produces methylthiopropionate, carbon monoxide and formate, and does not lie on the methionine recycle pathway.</text>
</comment>
<comment type="catalytic activity">
    <reaction evidence="1">
        <text>1,2-dihydroxy-5-(methylsulfanyl)pent-1-en-3-one + O2 = 4-methylsulfanyl-2-oxobutanoate + formate + 2 H(+)</text>
        <dbReference type="Rhea" id="RHEA:24504"/>
        <dbReference type="ChEBI" id="CHEBI:15378"/>
        <dbReference type="ChEBI" id="CHEBI:15379"/>
        <dbReference type="ChEBI" id="CHEBI:15740"/>
        <dbReference type="ChEBI" id="CHEBI:16723"/>
        <dbReference type="ChEBI" id="CHEBI:49252"/>
        <dbReference type="EC" id="1.13.11.54"/>
    </reaction>
</comment>
<comment type="catalytic activity">
    <reaction evidence="1">
        <text>1,2-dihydroxy-5-(methylsulfanyl)pent-1-en-3-one + O2 = 3-(methylsulfanyl)propanoate + CO + formate + 2 H(+)</text>
        <dbReference type="Rhea" id="RHEA:14161"/>
        <dbReference type="ChEBI" id="CHEBI:15378"/>
        <dbReference type="ChEBI" id="CHEBI:15379"/>
        <dbReference type="ChEBI" id="CHEBI:15740"/>
        <dbReference type="ChEBI" id="CHEBI:17245"/>
        <dbReference type="ChEBI" id="CHEBI:49016"/>
        <dbReference type="ChEBI" id="CHEBI:49252"/>
        <dbReference type="EC" id="1.13.11.53"/>
    </reaction>
</comment>
<comment type="cofactor">
    <cofactor evidence="1">
        <name>Fe(2+)</name>
        <dbReference type="ChEBI" id="CHEBI:29033"/>
    </cofactor>
    <cofactor evidence="1">
        <name>Ni(2+)</name>
        <dbReference type="ChEBI" id="CHEBI:49786"/>
    </cofactor>
    <text evidence="1">Binds either 1 Fe or Ni cation per monomer. Iron-binding promotes an acireductone dioxygenase reaction producing 2-keto-4-methylthiobutyrate, while nickel-binding promotes an acireductone dioxygenase reaction producing 3-(methylsulfanyl)propanoate.</text>
</comment>
<comment type="pathway">
    <text evidence="1">Amino-acid biosynthesis; L-methionine biosynthesis via salvage pathway; L-methionine from S-methyl-5-thio-alpha-D-ribose 1-phosphate: step 5/6.</text>
</comment>
<comment type="subcellular location">
    <subcellularLocation>
        <location evidence="1">Cytoplasm</location>
    </subcellularLocation>
    <subcellularLocation>
        <location evidence="1">Nucleus</location>
    </subcellularLocation>
</comment>
<comment type="similarity">
    <text evidence="1">Belongs to the acireductone dioxygenase (ARD) family.</text>
</comment>
<protein>
    <recommendedName>
        <fullName evidence="1">Acireductone dioxygenase</fullName>
    </recommendedName>
    <alternativeName>
        <fullName evidence="1">Acireductone dioxygenase (Fe(2+)-requiring)</fullName>
        <shortName evidence="1">ARD'</shortName>
        <shortName evidence="1">Fe-ARD</shortName>
        <ecNumber evidence="1">1.13.11.54</ecNumber>
    </alternativeName>
    <alternativeName>
        <fullName evidence="1">Acireductone dioxygenase (Ni(2+)-requiring)</fullName>
        <shortName evidence="1">ARD</shortName>
        <shortName evidence="1">Ni-ARD</shortName>
        <ecNumber evidence="1">1.13.11.53</ecNumber>
    </alternativeName>
</protein>
<name>MTND_TUBMM</name>
<gene>
    <name evidence="1" type="primary">ADI1</name>
    <name type="ORF">GSTUM_00006393001</name>
</gene>
<reference key="1">
    <citation type="journal article" date="2010" name="Nature">
        <title>Perigord black truffle genome uncovers evolutionary origins and mechanisms of symbiosis.</title>
        <authorList>
            <person name="Martin F."/>
            <person name="Kohler A."/>
            <person name="Murat C."/>
            <person name="Balestrini R."/>
            <person name="Coutinho P.M."/>
            <person name="Jaillon O."/>
            <person name="Montanini B."/>
            <person name="Morin E."/>
            <person name="Noel B."/>
            <person name="Percudani R."/>
            <person name="Porcel B."/>
            <person name="Rubini A."/>
            <person name="Amicucci A."/>
            <person name="Amselem J."/>
            <person name="Anthouard V."/>
            <person name="Arcioni S."/>
            <person name="Artiguenave F."/>
            <person name="Aury J.M."/>
            <person name="Ballario P."/>
            <person name="Bolchi A."/>
            <person name="Brenna A."/>
            <person name="Brun A."/>
            <person name="Buee M."/>
            <person name="Cantarel B."/>
            <person name="Chevalier G."/>
            <person name="Couloux A."/>
            <person name="Da Silva C."/>
            <person name="Denoeud F."/>
            <person name="Duplessis S."/>
            <person name="Ghignone S."/>
            <person name="Hilselberger B."/>
            <person name="Iotti M."/>
            <person name="Marcais B."/>
            <person name="Mello A."/>
            <person name="Miranda M."/>
            <person name="Pacioni G."/>
            <person name="Quesneville H."/>
            <person name="Riccioni C."/>
            <person name="Ruotolo R."/>
            <person name="Splivallo R."/>
            <person name="Stocchi V."/>
            <person name="Tisserant E."/>
            <person name="Viscomi A.R."/>
            <person name="Zambonelli A."/>
            <person name="Zampieri E."/>
            <person name="Henrissat B."/>
            <person name="Lebrun M.H."/>
            <person name="Paolocci F."/>
            <person name="Bonfante P."/>
            <person name="Ottonello S."/>
            <person name="Wincker P."/>
        </authorList>
    </citation>
    <scope>NUCLEOTIDE SEQUENCE [LARGE SCALE GENOMIC DNA]</scope>
    <source>
        <strain>Mel28</strain>
    </source>
</reference>
<sequence length="173" mass="19989">MKVYEYDNSTEDQREDHDSGAVVSEAALNEIGVLAYHFDSVDDVNALAAERGYKNRDEVTISPSALGDIYEDKVKAFFHEHLHEDEEIRYILDGEGFFDVRSKDDSWVRIRLSKGDLIILPAGIYHRFTTDKNNYIKAMRLFQEDPKWTPLNRDPLVDENAYRKAYINSLPLA</sequence>
<feature type="chain" id="PRO_0000414367" description="Acireductone dioxygenase">
    <location>
        <begin position="1"/>
        <end position="173"/>
    </location>
</feature>
<feature type="region of interest" description="Disordered" evidence="2">
    <location>
        <begin position="1"/>
        <end position="20"/>
    </location>
</feature>
<feature type="binding site" evidence="1">
    <location>
        <position position="81"/>
    </location>
    <ligand>
        <name>Fe(2+)</name>
        <dbReference type="ChEBI" id="CHEBI:29033"/>
        <note>for iron-dependent acireductone dioxygenase activity</note>
    </ligand>
</feature>
<feature type="binding site" evidence="1">
    <location>
        <position position="81"/>
    </location>
    <ligand>
        <name>Ni(2+)</name>
        <dbReference type="ChEBI" id="CHEBI:49786"/>
        <note>for nickel-dependent acireductone dioxygenase activity</note>
    </ligand>
</feature>
<feature type="binding site" evidence="1">
    <location>
        <position position="83"/>
    </location>
    <ligand>
        <name>Fe(2+)</name>
        <dbReference type="ChEBI" id="CHEBI:29033"/>
        <note>for iron-dependent acireductone dioxygenase activity</note>
    </ligand>
</feature>
<feature type="binding site" evidence="1">
    <location>
        <position position="83"/>
    </location>
    <ligand>
        <name>Ni(2+)</name>
        <dbReference type="ChEBI" id="CHEBI:49786"/>
        <note>for nickel-dependent acireductone dioxygenase activity</note>
    </ligand>
</feature>
<feature type="binding site" evidence="1">
    <location>
        <position position="87"/>
    </location>
    <ligand>
        <name>Fe(2+)</name>
        <dbReference type="ChEBI" id="CHEBI:29033"/>
        <note>for iron-dependent acireductone dioxygenase activity</note>
    </ligand>
</feature>
<feature type="binding site" evidence="1">
    <location>
        <position position="87"/>
    </location>
    <ligand>
        <name>Ni(2+)</name>
        <dbReference type="ChEBI" id="CHEBI:49786"/>
        <note>for nickel-dependent acireductone dioxygenase activity</note>
    </ligand>
</feature>
<feature type="binding site" evidence="1">
    <location>
        <position position="126"/>
    </location>
    <ligand>
        <name>Fe(2+)</name>
        <dbReference type="ChEBI" id="CHEBI:29033"/>
        <note>for iron-dependent acireductone dioxygenase activity</note>
    </ligand>
</feature>
<feature type="binding site" evidence="1">
    <location>
        <position position="126"/>
    </location>
    <ligand>
        <name>Ni(2+)</name>
        <dbReference type="ChEBI" id="CHEBI:49786"/>
        <note>for nickel-dependent acireductone dioxygenase activity</note>
    </ligand>
</feature>
<organism>
    <name type="scientific">Tuber melanosporum (strain Mel28)</name>
    <name type="common">Perigord black truffle</name>
    <dbReference type="NCBI Taxonomy" id="656061"/>
    <lineage>
        <taxon>Eukaryota</taxon>
        <taxon>Fungi</taxon>
        <taxon>Dikarya</taxon>
        <taxon>Ascomycota</taxon>
        <taxon>Pezizomycotina</taxon>
        <taxon>Pezizomycetes</taxon>
        <taxon>Pezizales</taxon>
        <taxon>Tuberaceae</taxon>
        <taxon>Tuber</taxon>
    </lineage>
</organism>
<evidence type="ECO:0000255" key="1">
    <source>
        <dbReference type="HAMAP-Rule" id="MF_03154"/>
    </source>
</evidence>
<evidence type="ECO:0000256" key="2">
    <source>
        <dbReference type="SAM" id="MobiDB-lite"/>
    </source>
</evidence>
<dbReference type="EC" id="1.13.11.54" evidence="1"/>
<dbReference type="EC" id="1.13.11.53" evidence="1"/>
<dbReference type="EMBL" id="FN430164">
    <property type="protein sequence ID" value="CAZ82802.1"/>
    <property type="molecule type" value="Genomic_DNA"/>
</dbReference>
<dbReference type="RefSeq" id="XP_002838611.1">
    <property type="nucleotide sequence ID" value="XM_002838565.1"/>
</dbReference>
<dbReference type="SMR" id="D5GE59"/>
<dbReference type="FunCoup" id="D5GE59">
    <property type="interactions" value="248"/>
</dbReference>
<dbReference type="STRING" id="656061.D5GE59"/>
<dbReference type="EnsemblFungi" id="CAZ82802">
    <property type="protein sequence ID" value="CAZ82802"/>
    <property type="gene ID" value="GSTUM_00006393001"/>
</dbReference>
<dbReference type="GeneID" id="9183134"/>
<dbReference type="KEGG" id="tml:GSTUM_00006393001"/>
<dbReference type="eggNOG" id="KOG2107">
    <property type="taxonomic scope" value="Eukaryota"/>
</dbReference>
<dbReference type="HOGENOM" id="CLU_090154_0_1_1"/>
<dbReference type="InParanoid" id="D5GE59"/>
<dbReference type="OMA" id="WYMDESQ"/>
<dbReference type="UniPathway" id="UPA00904">
    <property type="reaction ID" value="UER00878"/>
</dbReference>
<dbReference type="Proteomes" id="UP000006911">
    <property type="component" value="Unassembled WGS sequence"/>
</dbReference>
<dbReference type="GO" id="GO:0005737">
    <property type="term" value="C:cytoplasm"/>
    <property type="evidence" value="ECO:0007669"/>
    <property type="project" value="UniProtKB-SubCell"/>
</dbReference>
<dbReference type="GO" id="GO:0005634">
    <property type="term" value="C:nucleus"/>
    <property type="evidence" value="ECO:0007669"/>
    <property type="project" value="UniProtKB-SubCell"/>
</dbReference>
<dbReference type="GO" id="GO:0010308">
    <property type="term" value="F:acireductone dioxygenase (Ni2+-requiring) activity"/>
    <property type="evidence" value="ECO:0007669"/>
    <property type="project" value="UniProtKB-UniRule"/>
</dbReference>
<dbReference type="GO" id="GO:0010309">
    <property type="term" value="F:acireductone dioxygenase [iron(II)-requiring] activity"/>
    <property type="evidence" value="ECO:0007669"/>
    <property type="project" value="UniProtKB-UniRule"/>
</dbReference>
<dbReference type="GO" id="GO:0005506">
    <property type="term" value="F:iron ion binding"/>
    <property type="evidence" value="ECO:0007669"/>
    <property type="project" value="UniProtKB-UniRule"/>
</dbReference>
<dbReference type="GO" id="GO:0016151">
    <property type="term" value="F:nickel cation binding"/>
    <property type="evidence" value="ECO:0007669"/>
    <property type="project" value="UniProtKB-UniRule"/>
</dbReference>
<dbReference type="GO" id="GO:0019509">
    <property type="term" value="P:L-methionine salvage from methylthioadenosine"/>
    <property type="evidence" value="ECO:0007669"/>
    <property type="project" value="UniProtKB-UniRule"/>
</dbReference>
<dbReference type="CDD" id="cd02232">
    <property type="entry name" value="cupin_ARD"/>
    <property type="match status" value="1"/>
</dbReference>
<dbReference type="FunFam" id="2.60.120.10:FF:000079">
    <property type="entry name" value="1,2-dihydroxy-3-keto-5-methylthiopentene dioxygenase"/>
    <property type="match status" value="1"/>
</dbReference>
<dbReference type="Gene3D" id="2.60.120.10">
    <property type="entry name" value="Jelly Rolls"/>
    <property type="match status" value="1"/>
</dbReference>
<dbReference type="HAMAP" id="MF_03154">
    <property type="entry name" value="Salvage_MtnD_euk"/>
    <property type="match status" value="1"/>
</dbReference>
<dbReference type="InterPro" id="IPR004313">
    <property type="entry name" value="ARD"/>
</dbReference>
<dbReference type="InterPro" id="IPR027496">
    <property type="entry name" value="ARD_euk"/>
</dbReference>
<dbReference type="InterPro" id="IPR014710">
    <property type="entry name" value="RmlC-like_jellyroll"/>
</dbReference>
<dbReference type="InterPro" id="IPR011051">
    <property type="entry name" value="RmlC_Cupin_sf"/>
</dbReference>
<dbReference type="PANTHER" id="PTHR23418">
    <property type="entry name" value="ACIREDUCTONE DIOXYGENASE"/>
    <property type="match status" value="1"/>
</dbReference>
<dbReference type="PANTHER" id="PTHR23418:SF0">
    <property type="entry name" value="ACIREDUCTONE DIOXYGENASE"/>
    <property type="match status" value="1"/>
</dbReference>
<dbReference type="Pfam" id="PF03079">
    <property type="entry name" value="ARD"/>
    <property type="match status" value="1"/>
</dbReference>
<dbReference type="SUPFAM" id="SSF51182">
    <property type="entry name" value="RmlC-like cupins"/>
    <property type="match status" value="1"/>
</dbReference>
<keyword id="KW-0028">Amino-acid biosynthesis</keyword>
<keyword id="KW-0963">Cytoplasm</keyword>
<keyword id="KW-0223">Dioxygenase</keyword>
<keyword id="KW-0408">Iron</keyword>
<keyword id="KW-0479">Metal-binding</keyword>
<keyword id="KW-0486">Methionine biosynthesis</keyword>
<keyword id="KW-0533">Nickel</keyword>
<keyword id="KW-0539">Nucleus</keyword>
<keyword id="KW-0560">Oxidoreductase</keyword>
<keyword id="KW-1185">Reference proteome</keyword>